<comment type="catalytic activity">
    <reaction evidence="1">
        <text>CMP + ATP = CDP + ADP</text>
        <dbReference type="Rhea" id="RHEA:11600"/>
        <dbReference type="ChEBI" id="CHEBI:30616"/>
        <dbReference type="ChEBI" id="CHEBI:58069"/>
        <dbReference type="ChEBI" id="CHEBI:60377"/>
        <dbReference type="ChEBI" id="CHEBI:456216"/>
        <dbReference type="EC" id="2.7.4.25"/>
    </reaction>
</comment>
<comment type="catalytic activity">
    <reaction evidence="1">
        <text>dCMP + ATP = dCDP + ADP</text>
        <dbReference type="Rhea" id="RHEA:25094"/>
        <dbReference type="ChEBI" id="CHEBI:30616"/>
        <dbReference type="ChEBI" id="CHEBI:57566"/>
        <dbReference type="ChEBI" id="CHEBI:58593"/>
        <dbReference type="ChEBI" id="CHEBI:456216"/>
        <dbReference type="EC" id="2.7.4.25"/>
    </reaction>
</comment>
<comment type="subcellular location">
    <subcellularLocation>
        <location evidence="1">Cytoplasm</location>
    </subcellularLocation>
</comment>
<comment type="similarity">
    <text evidence="1">Belongs to the cytidylate kinase family. Type 1 subfamily.</text>
</comment>
<proteinExistence type="inferred from homology"/>
<protein>
    <recommendedName>
        <fullName evidence="1">Cytidylate kinase</fullName>
        <shortName evidence="1">CK</shortName>
        <ecNumber evidence="1">2.7.4.25</ecNumber>
    </recommendedName>
    <alternativeName>
        <fullName evidence="1">Cytidine monophosphate kinase</fullName>
        <shortName evidence="1">CMP kinase</shortName>
    </alternativeName>
</protein>
<reference key="1">
    <citation type="journal article" date="2004" name="Nucleic Acids Res.">
        <title>Whole genome comparisons of serotype 4b and 1/2a strains of the food-borne pathogen Listeria monocytogenes reveal new insights into the core genome components of this species.</title>
        <authorList>
            <person name="Nelson K.E."/>
            <person name="Fouts D.E."/>
            <person name="Mongodin E.F."/>
            <person name="Ravel J."/>
            <person name="DeBoy R.T."/>
            <person name="Kolonay J.F."/>
            <person name="Rasko D.A."/>
            <person name="Angiuoli S.V."/>
            <person name="Gill S.R."/>
            <person name="Paulsen I.T."/>
            <person name="Peterson J.D."/>
            <person name="White O."/>
            <person name="Nelson W.C."/>
            <person name="Nierman W.C."/>
            <person name="Beanan M.J."/>
            <person name="Brinkac L.M."/>
            <person name="Daugherty S.C."/>
            <person name="Dodson R.J."/>
            <person name="Durkin A.S."/>
            <person name="Madupu R."/>
            <person name="Haft D.H."/>
            <person name="Selengut J."/>
            <person name="Van Aken S.E."/>
            <person name="Khouri H.M."/>
            <person name="Fedorova N."/>
            <person name="Forberger H.A."/>
            <person name="Tran B."/>
            <person name="Kathariou S."/>
            <person name="Wonderling L.D."/>
            <person name="Uhlich G.A."/>
            <person name="Bayles D.O."/>
            <person name="Luchansky J.B."/>
            <person name="Fraser C.M."/>
        </authorList>
    </citation>
    <scope>NUCLEOTIDE SEQUENCE [LARGE SCALE GENOMIC DNA]</scope>
    <source>
        <strain>F2365</strain>
    </source>
</reference>
<feature type="chain" id="PRO_0000131929" description="Cytidylate kinase">
    <location>
        <begin position="1"/>
        <end position="224"/>
    </location>
</feature>
<feature type="binding site" evidence="1">
    <location>
        <begin position="11"/>
        <end position="19"/>
    </location>
    <ligand>
        <name>ATP</name>
        <dbReference type="ChEBI" id="CHEBI:30616"/>
    </ligand>
</feature>
<organism>
    <name type="scientific">Listeria monocytogenes serotype 4b (strain F2365)</name>
    <dbReference type="NCBI Taxonomy" id="265669"/>
    <lineage>
        <taxon>Bacteria</taxon>
        <taxon>Bacillati</taxon>
        <taxon>Bacillota</taxon>
        <taxon>Bacilli</taxon>
        <taxon>Bacillales</taxon>
        <taxon>Listeriaceae</taxon>
        <taxon>Listeria</taxon>
    </lineage>
</organism>
<keyword id="KW-0067">ATP-binding</keyword>
<keyword id="KW-0963">Cytoplasm</keyword>
<keyword id="KW-0418">Kinase</keyword>
<keyword id="KW-0547">Nucleotide-binding</keyword>
<keyword id="KW-0808">Transferase</keyword>
<evidence type="ECO:0000255" key="1">
    <source>
        <dbReference type="HAMAP-Rule" id="MF_00238"/>
    </source>
</evidence>
<sequence>MTKKICIAIDGPAAAGKSTVAKIVAKKLRFVYIDTGAMYRAVTYIALKNNIAYEDEKAIATLLQKTVIRFEPGEVQQVFVGEENVTEVIRSLEVTNHVSIVAAHPSIREALQERQQVFATEGGIVMDGRDIGTAVLPNAELKIFLLASVEERAERRYKENMAKGFAGDLGQLKKEIEERDHLDYTRTHSPLKKADDAIEVDTTSMSIDEVANKILSLAELKINN</sequence>
<name>KCY_LISMF</name>
<accession>Q71Y76</accession>
<dbReference type="EC" id="2.7.4.25" evidence="1"/>
<dbReference type="EMBL" id="AE017262">
    <property type="protein sequence ID" value="AAT04738.1"/>
    <property type="molecule type" value="Genomic_DNA"/>
</dbReference>
<dbReference type="RefSeq" id="WP_003725930.1">
    <property type="nucleotide sequence ID" value="NC_002973.6"/>
</dbReference>
<dbReference type="SMR" id="Q71Y76"/>
<dbReference type="KEGG" id="lmf:LMOf2365_1968"/>
<dbReference type="HOGENOM" id="CLU_079959_0_2_9"/>
<dbReference type="GO" id="GO:0005829">
    <property type="term" value="C:cytosol"/>
    <property type="evidence" value="ECO:0007669"/>
    <property type="project" value="TreeGrafter"/>
</dbReference>
<dbReference type="GO" id="GO:0005524">
    <property type="term" value="F:ATP binding"/>
    <property type="evidence" value="ECO:0007669"/>
    <property type="project" value="UniProtKB-UniRule"/>
</dbReference>
<dbReference type="GO" id="GO:0036430">
    <property type="term" value="F:CMP kinase activity"/>
    <property type="evidence" value="ECO:0007669"/>
    <property type="project" value="RHEA"/>
</dbReference>
<dbReference type="GO" id="GO:0036431">
    <property type="term" value="F:dCMP kinase activity"/>
    <property type="evidence" value="ECO:0007669"/>
    <property type="project" value="RHEA"/>
</dbReference>
<dbReference type="GO" id="GO:0015949">
    <property type="term" value="P:nucleobase-containing small molecule interconversion"/>
    <property type="evidence" value="ECO:0007669"/>
    <property type="project" value="TreeGrafter"/>
</dbReference>
<dbReference type="GO" id="GO:0006220">
    <property type="term" value="P:pyrimidine nucleotide metabolic process"/>
    <property type="evidence" value="ECO:0007669"/>
    <property type="project" value="UniProtKB-UniRule"/>
</dbReference>
<dbReference type="CDD" id="cd02020">
    <property type="entry name" value="CMPK"/>
    <property type="match status" value="1"/>
</dbReference>
<dbReference type="FunFam" id="3.40.50.300:FF:000484">
    <property type="entry name" value="Cytidylate kinase"/>
    <property type="match status" value="1"/>
</dbReference>
<dbReference type="Gene3D" id="3.40.50.300">
    <property type="entry name" value="P-loop containing nucleotide triphosphate hydrolases"/>
    <property type="match status" value="1"/>
</dbReference>
<dbReference type="HAMAP" id="MF_00238">
    <property type="entry name" value="Cytidyl_kinase_type1"/>
    <property type="match status" value="1"/>
</dbReference>
<dbReference type="InterPro" id="IPR003136">
    <property type="entry name" value="Cytidylate_kin"/>
</dbReference>
<dbReference type="InterPro" id="IPR011994">
    <property type="entry name" value="Cytidylate_kinase_dom"/>
</dbReference>
<dbReference type="InterPro" id="IPR027417">
    <property type="entry name" value="P-loop_NTPase"/>
</dbReference>
<dbReference type="NCBIfam" id="TIGR00017">
    <property type="entry name" value="cmk"/>
    <property type="match status" value="1"/>
</dbReference>
<dbReference type="PANTHER" id="PTHR21299:SF2">
    <property type="entry name" value="CYTIDYLATE KINASE"/>
    <property type="match status" value="1"/>
</dbReference>
<dbReference type="PANTHER" id="PTHR21299">
    <property type="entry name" value="CYTIDYLATE KINASE/PANTOATE-BETA-ALANINE LIGASE"/>
    <property type="match status" value="1"/>
</dbReference>
<dbReference type="Pfam" id="PF02224">
    <property type="entry name" value="Cytidylate_kin"/>
    <property type="match status" value="1"/>
</dbReference>
<dbReference type="SUPFAM" id="SSF52540">
    <property type="entry name" value="P-loop containing nucleoside triphosphate hydrolases"/>
    <property type="match status" value="1"/>
</dbReference>
<gene>
    <name evidence="1" type="primary">cmk</name>
    <name type="ordered locus">LMOf2365_1968</name>
</gene>